<dbReference type="EMBL" id="AC243980">
    <property type="status" value="NOT_ANNOTATED_CDS"/>
    <property type="molecule type" value="Genomic_DNA"/>
</dbReference>
<dbReference type="SMR" id="A0A0B4J235"/>
<dbReference type="FunCoup" id="A0A0B4J235">
    <property type="interactions" value="325"/>
</dbReference>
<dbReference type="IMGT_GENE-DB" id="TRAV13-2"/>
<dbReference type="GlyCosmos" id="A0A0B4J235">
    <property type="glycosylation" value="1 site, No reported glycans"/>
</dbReference>
<dbReference type="GlyGen" id="A0A0B4J235">
    <property type="glycosylation" value="1 site"/>
</dbReference>
<dbReference type="BioMuta" id="TRAV13-2"/>
<dbReference type="Ensembl" id="ENST00000390439.2">
    <property type="protein sequence ID" value="ENSP00000438480.1"/>
    <property type="gene ID" value="ENSG00000211791.2"/>
</dbReference>
<dbReference type="AGR" id="HGNC:12109"/>
<dbReference type="GeneCards" id="TRAV13-2"/>
<dbReference type="HGNC" id="HGNC:12109">
    <property type="gene designation" value="TRAV13-2"/>
</dbReference>
<dbReference type="HPA" id="ENSG00000211791">
    <property type="expression patterns" value="Tissue enriched (lymphoid)"/>
</dbReference>
<dbReference type="neXtProt" id="NX_A0A0B4J235"/>
<dbReference type="OpenTargets" id="ENSG00000211791"/>
<dbReference type="VEuPathDB" id="HostDB:ENSG00000211791"/>
<dbReference type="GeneTree" id="ENSGT00940000159469"/>
<dbReference type="HOGENOM" id="CLU_077975_8_3_1"/>
<dbReference type="InParanoid" id="A0A0B4J235"/>
<dbReference type="OMA" id="ASDYFIW"/>
<dbReference type="OrthoDB" id="8947657at2759"/>
<dbReference type="PAN-GO" id="A0A0B4J235">
    <property type="GO annotations" value="1 GO annotation based on evolutionary models"/>
</dbReference>
<dbReference type="PhylomeDB" id="A0A0B4J235"/>
<dbReference type="SignaLink" id="A0A0B4J235"/>
<dbReference type="ChiTaRS" id="TRAV13-2">
    <property type="organism name" value="human"/>
</dbReference>
<dbReference type="Pharos" id="A0A0B4J235">
    <property type="development level" value="Tdark"/>
</dbReference>
<dbReference type="PRO" id="PR:A0A0B4J235"/>
<dbReference type="Proteomes" id="UP000005640">
    <property type="component" value="Chromosome 14"/>
</dbReference>
<dbReference type="RNAct" id="A0A0B4J235">
    <property type="molecule type" value="protein"/>
</dbReference>
<dbReference type="Bgee" id="ENSG00000211791">
    <property type="expression patterns" value="Expressed in male germ line stem cell (sensu Vertebrata) in testis and 101 other cell types or tissues"/>
</dbReference>
<dbReference type="GO" id="GO:0042101">
    <property type="term" value="C:T cell receptor complex"/>
    <property type="evidence" value="ECO:0007669"/>
    <property type="project" value="UniProtKB-KW"/>
</dbReference>
<dbReference type="GO" id="GO:0002250">
    <property type="term" value="P:adaptive immune response"/>
    <property type="evidence" value="ECO:0007669"/>
    <property type="project" value="UniProtKB-KW"/>
</dbReference>
<dbReference type="GO" id="GO:0009617">
    <property type="term" value="P:response to bacterium"/>
    <property type="evidence" value="ECO:0000318"/>
    <property type="project" value="GO_Central"/>
</dbReference>
<dbReference type="Gene3D" id="2.60.40.10">
    <property type="entry name" value="Immunoglobulins"/>
    <property type="match status" value="1"/>
</dbReference>
<dbReference type="InterPro" id="IPR007110">
    <property type="entry name" value="Ig-like_dom"/>
</dbReference>
<dbReference type="InterPro" id="IPR036179">
    <property type="entry name" value="Ig-like_dom_sf"/>
</dbReference>
<dbReference type="InterPro" id="IPR013783">
    <property type="entry name" value="Ig-like_fold"/>
</dbReference>
<dbReference type="InterPro" id="IPR013106">
    <property type="entry name" value="Ig_V-set"/>
</dbReference>
<dbReference type="InterPro" id="IPR051006">
    <property type="entry name" value="TCR_variable_domain"/>
</dbReference>
<dbReference type="PANTHER" id="PTHR19343:SF14">
    <property type="entry name" value="IG-LIKE DOMAIN-CONTAINING PROTEIN-RELATED"/>
    <property type="match status" value="1"/>
</dbReference>
<dbReference type="PANTHER" id="PTHR19343">
    <property type="entry name" value="T CELL RECEPTOR ALPHA VARIABLE 1-2"/>
    <property type="match status" value="1"/>
</dbReference>
<dbReference type="Pfam" id="PF07686">
    <property type="entry name" value="V-set"/>
    <property type="match status" value="1"/>
</dbReference>
<dbReference type="SMART" id="SM00406">
    <property type="entry name" value="IGv"/>
    <property type="match status" value="1"/>
</dbReference>
<dbReference type="SUPFAM" id="SSF48726">
    <property type="entry name" value="Immunoglobulin"/>
    <property type="match status" value="1"/>
</dbReference>
<dbReference type="PROSITE" id="PS50835">
    <property type="entry name" value="IG_LIKE"/>
    <property type="match status" value="1"/>
</dbReference>
<gene>
    <name evidence="8" type="primary">TRAV13-2</name>
</gene>
<evidence type="ECO:0000255" key="1"/>
<evidence type="ECO:0000255" key="2">
    <source>
        <dbReference type="PROSITE-ProRule" id="PRU00114"/>
    </source>
</evidence>
<evidence type="ECO:0000303" key="3">
    <source>
    </source>
</evidence>
<evidence type="ECO:0000303" key="4">
    <source>
    </source>
</evidence>
<evidence type="ECO:0000303" key="5">
    <source>
    </source>
</evidence>
<evidence type="ECO:0000303" key="6">
    <source>
    </source>
</evidence>
<evidence type="ECO:0000303" key="7">
    <source>
    </source>
</evidence>
<evidence type="ECO:0000303" key="8">
    <source ref="2"/>
</evidence>
<evidence type="ECO:0000305" key="9"/>
<accession>A0A0B4J235</accession>
<name>TVAM2_HUMAN</name>
<keyword id="KW-1064">Adaptive immunity</keyword>
<keyword id="KW-1003">Cell membrane</keyword>
<keyword id="KW-1015">Disulfide bond</keyword>
<keyword id="KW-0325">Glycoprotein</keyword>
<keyword id="KW-0391">Immunity</keyword>
<keyword id="KW-0393">Immunoglobulin domain</keyword>
<keyword id="KW-0472">Membrane</keyword>
<keyword id="KW-0675">Receptor</keyword>
<keyword id="KW-1185">Reference proteome</keyword>
<keyword id="KW-0732">Signal</keyword>
<keyword id="KW-1279">T cell receptor</keyword>
<organism>
    <name type="scientific">Homo sapiens</name>
    <name type="common">Human</name>
    <dbReference type="NCBI Taxonomy" id="9606"/>
    <lineage>
        <taxon>Eukaryota</taxon>
        <taxon>Metazoa</taxon>
        <taxon>Chordata</taxon>
        <taxon>Craniata</taxon>
        <taxon>Vertebrata</taxon>
        <taxon>Euteleostomi</taxon>
        <taxon>Mammalia</taxon>
        <taxon>Eutheria</taxon>
        <taxon>Euarchontoglires</taxon>
        <taxon>Primates</taxon>
        <taxon>Haplorrhini</taxon>
        <taxon>Catarrhini</taxon>
        <taxon>Hominidae</taxon>
        <taxon>Homo</taxon>
    </lineage>
</organism>
<feature type="signal peptide" evidence="1">
    <location>
        <begin position="1"/>
        <end position="21"/>
    </location>
</feature>
<feature type="chain" id="PRO_0000443268" description="T cell receptor alpha variable 13-2" evidence="1">
    <location>
        <begin position="22"/>
        <end position="113"/>
    </location>
</feature>
<feature type="domain" description="Ig-like" evidence="2">
    <location>
        <begin position="22"/>
        <end position="113" status="greater than"/>
    </location>
</feature>
<feature type="glycosylation site" description="N-linked (GlcNAc...) asparagine" evidence="1">
    <location>
        <position position="87"/>
    </location>
</feature>
<feature type="disulfide bond" evidence="2">
    <location>
        <begin position="43"/>
        <end position="110"/>
    </location>
</feature>
<feature type="non-terminal residue">
    <location>
        <position position="113"/>
    </location>
</feature>
<comment type="function">
    <text evidence="3 5 6 7">V region of the variable domain of T cell receptor (TR) alpha chain that participates in the antigen recognition (PubMed:24600447). Alpha-beta T cell receptors are antigen specific receptors which are essential to the immune response and are present on the cell surface of T lymphocytes. Recognize peptide-major histocompatibility (MH) (pMH) complexes that are displayed by antigen presenting cells (APC), a prerequisite for efficient T cell adaptive immunity against pathogens (PubMed:25493333). Binding of alpha-beta TR to pMH complex initiates TR-CD3 clustering on the cell surface and intracellular activation of LCK that phosphorylates the ITAM motifs of CD3G, CD3D, CD3E and CD247 enabling the recruitment of ZAP70. In turn ZAP70 phosphorylates LAT, which recruits numerous signaling molecules to form the LAT signalosome. The LAT signalosome propagates signal branching to three major signaling pathways, the calcium, the mitogen-activated protein kinase (MAPK) kinase and the nuclear factor NF-kappa-B (NF-kB) pathways, leading to the mobilization of transcription factors that are critical for gene expression and essential for T cell growth and differentiation (PubMed:23524462). The T cell repertoire is generated in the thymus, by V-(D)-J rearrangement. This repertoire is then shaped by intrathymic selection events to generate a peripheral T cell pool of self-MH restricted, non-autoaggressive T cells. Post-thymic interaction of alpha-beta TR with the pMH complexes shapes TR structural and functional avidity (PubMed:15040585).</text>
</comment>
<comment type="subunit">
    <text evidence="4">Alpha-beta TR is a heterodimer composed of an alpha and beta chain; disulfide-linked. The alpha-beta TR is associated with the transmembrane signaling CD3 coreceptor proteins to form the TR-CD3 (TcR or TCR). The assembly of alpha-beta TR heterodimers with CD3 occurs in the endoplasmic reticulum where a single alpha-beta TR heterodimer associates with one CD3D-CD3E heterodimer, one CD3G-CD3E heterodimer and one CD247 homodimer forming a stable octameric structure. CD3D-CD3E and CD3G-CD3E heterodimers preferentially associate with TR alpha and TR beta chains, respectively. The association of the CD247 homodimer is the last step of TcR assembly in the endoplasmic reticulum and is required for transport to the cell surface.</text>
</comment>
<comment type="subcellular location">
    <subcellularLocation>
        <location evidence="4">Cell membrane</location>
    </subcellularLocation>
</comment>
<comment type="polymorphism">
    <text evidence="9">There are several alleles. The sequence shown is that of IMGT allele TRAV13-2*01.</text>
</comment>
<sequence length="113" mass="12716">MAGIRALFMYLWLQLDWVSRGESVGLHLPTLSVQEGDNSIINCAYSNSASDYFIWYKQESGKGPQFIIDIRSNMDKRQGQRVTVLLNKTVKHLSLQIAATQPGDSAVYFCAEN</sequence>
<proteinExistence type="inferred from homology"/>
<protein>
    <recommendedName>
        <fullName evidence="8">T cell receptor alpha variable 13-2</fullName>
    </recommendedName>
</protein>
<reference key="1">
    <citation type="journal article" date="2003" name="Nature">
        <title>The DNA sequence and analysis of human chromosome 14.</title>
        <authorList>
            <person name="Heilig R."/>
            <person name="Eckenberg R."/>
            <person name="Petit J.-L."/>
            <person name="Fonknechten N."/>
            <person name="Da Silva C."/>
            <person name="Cattolico L."/>
            <person name="Levy M."/>
            <person name="Barbe V."/>
            <person name="De Berardinis V."/>
            <person name="Ureta-Vidal A."/>
            <person name="Pelletier E."/>
            <person name="Vico V."/>
            <person name="Anthouard V."/>
            <person name="Rowen L."/>
            <person name="Madan A."/>
            <person name="Qin S."/>
            <person name="Sun H."/>
            <person name="Du H."/>
            <person name="Pepin K."/>
            <person name="Artiguenave F."/>
            <person name="Robert C."/>
            <person name="Cruaud C."/>
            <person name="Bruels T."/>
            <person name="Jaillon O."/>
            <person name="Friedlander L."/>
            <person name="Samson G."/>
            <person name="Brottier P."/>
            <person name="Cure S."/>
            <person name="Segurens B."/>
            <person name="Aniere F."/>
            <person name="Samain S."/>
            <person name="Crespeau H."/>
            <person name="Abbasi N."/>
            <person name="Aiach N."/>
            <person name="Boscus D."/>
            <person name="Dickhoff R."/>
            <person name="Dors M."/>
            <person name="Dubois I."/>
            <person name="Friedman C."/>
            <person name="Gouyvenoux M."/>
            <person name="James R."/>
            <person name="Madan A."/>
            <person name="Mairey-Estrada B."/>
            <person name="Mangenot S."/>
            <person name="Martins N."/>
            <person name="Menard M."/>
            <person name="Oztas S."/>
            <person name="Ratcliffe A."/>
            <person name="Shaffer T."/>
            <person name="Trask B."/>
            <person name="Vacherie B."/>
            <person name="Bellemere C."/>
            <person name="Belser C."/>
            <person name="Besnard-Gonnet M."/>
            <person name="Bartol-Mavel D."/>
            <person name="Boutard M."/>
            <person name="Briez-Silla S."/>
            <person name="Combette S."/>
            <person name="Dufosse-Laurent V."/>
            <person name="Ferron C."/>
            <person name="Lechaplais C."/>
            <person name="Louesse C."/>
            <person name="Muselet D."/>
            <person name="Magdelenat G."/>
            <person name="Pateau E."/>
            <person name="Petit E."/>
            <person name="Sirvain-Trukniewicz P."/>
            <person name="Trybou A."/>
            <person name="Vega-Czarny N."/>
            <person name="Bataille E."/>
            <person name="Bluet E."/>
            <person name="Bordelais I."/>
            <person name="Dubois M."/>
            <person name="Dumont C."/>
            <person name="Guerin T."/>
            <person name="Haffray S."/>
            <person name="Hammadi R."/>
            <person name="Muanga J."/>
            <person name="Pellouin V."/>
            <person name="Robert D."/>
            <person name="Wunderle E."/>
            <person name="Gauguet G."/>
            <person name="Roy A."/>
            <person name="Sainte-Marthe L."/>
            <person name="Verdier J."/>
            <person name="Verdier-Discala C."/>
            <person name="Hillier L.W."/>
            <person name="Fulton L."/>
            <person name="McPherson J."/>
            <person name="Matsuda F."/>
            <person name="Wilson R."/>
            <person name="Scarpelli C."/>
            <person name="Gyapay G."/>
            <person name="Wincker P."/>
            <person name="Saurin W."/>
            <person name="Quetier F."/>
            <person name="Waterston R."/>
            <person name="Hood L."/>
            <person name="Weissenbach J."/>
        </authorList>
    </citation>
    <scope>NUCLEOTIDE SEQUENCE [LARGE SCALE GENOMIC DNA] (IMGT ALLELE TRAV13-2*01)</scope>
</reference>
<reference key="2">
    <citation type="book" date="2001" name="The T Cell Receptor FactsBook.">
        <title>The T Cell Receptor FactsBook.</title>
        <editorList>
            <person name="Lefranc M.P."/>
            <person name="Lefranc G."/>
        </editorList>
        <authorList>
            <person name="Lefranc M.P."/>
            <person name="Lefranc G."/>
        </authorList>
    </citation>
    <scope>NOMENCLATURE</scope>
</reference>
<reference key="3">
    <citation type="journal article" date="2004" name="Nat. Rev. Immunol.">
        <title>The many important facets of T-cell repertoire diversity.</title>
        <authorList>
            <person name="Nikolich-Zugich J."/>
            <person name="Slifka M.K."/>
            <person name="Messaoudi I."/>
        </authorList>
    </citation>
    <scope>REVIEW ON T CELL REPERTOIRE DIVERSITY</scope>
</reference>
<reference key="4">
    <citation type="journal article" date="2010" name="Cold Spring Harb. Perspect. Biol.">
        <title>Structural biology of the T-cell receptor: insights into receptor assembly, ligand recognition, and initiation of signaling.</title>
        <authorList>
            <person name="Wucherpfennig K.W."/>
            <person name="Gagnon E."/>
            <person name="Call M.J."/>
            <person name="Huseby E.S."/>
            <person name="Call M.E."/>
        </authorList>
    </citation>
    <scope>REVIEW ON T CELL RECEPTOR-CD3 COMPLEX ASSEMBLY</scope>
    <scope>SUBCELLULAR LOCATION</scope>
</reference>
<reference key="5">
    <citation type="journal article" date="2013" name="Nat. Rev. Immunol.">
        <title>T cell receptor signalling networks: branched, diversified and bounded.</title>
        <authorList>
            <person name="Brownlie R.J."/>
            <person name="Zamoyska R."/>
        </authorList>
    </citation>
    <scope>REVIEW ON T CELL RECEPTOR SIGNALING</scope>
</reference>
<reference key="6">
    <citation type="journal article" date="2014" name="Front. Immunol.">
        <title>Immunoglobulin and T Cell Receptor Genes: IMGT((R)) and the Birth and Rise of Immunoinformatics.</title>
        <authorList>
            <person name="Lefranc M.P."/>
        </authorList>
    </citation>
    <scope>NOMENCLATURE</scope>
</reference>
<reference key="7">
    <citation type="journal article" date="2015" name="Annu. Rev. Immunol.">
        <title>T cell antigen receptor recognition of antigen-presenting molecules.</title>
        <authorList>
            <person name="Rossjohn J."/>
            <person name="Gras S."/>
            <person name="Miles J.J."/>
            <person name="Turner S.J."/>
            <person name="Godfrey D.I."/>
            <person name="McCluskey J."/>
        </authorList>
    </citation>
    <scope>REVIEW ON FUNCTION</scope>
</reference>